<feature type="chain" id="PRO_0000162848" description="Thiazole synthase">
    <location>
        <begin position="1"/>
        <end position="275"/>
    </location>
</feature>
<feature type="active site" description="Schiff-base intermediate with DXP" evidence="1">
    <location>
        <position position="108"/>
    </location>
</feature>
<feature type="binding site" evidence="1">
    <location>
        <position position="169"/>
    </location>
    <ligand>
        <name>1-deoxy-D-xylulose 5-phosphate</name>
        <dbReference type="ChEBI" id="CHEBI:57792"/>
    </ligand>
</feature>
<feature type="binding site" evidence="1">
    <location>
        <begin position="196"/>
        <end position="197"/>
    </location>
    <ligand>
        <name>1-deoxy-D-xylulose 5-phosphate</name>
        <dbReference type="ChEBI" id="CHEBI:57792"/>
    </ligand>
</feature>
<feature type="binding site" evidence="1">
    <location>
        <begin position="218"/>
        <end position="219"/>
    </location>
    <ligand>
        <name>1-deoxy-D-xylulose 5-phosphate</name>
        <dbReference type="ChEBI" id="CHEBI:57792"/>
    </ligand>
</feature>
<keyword id="KW-0963">Cytoplasm</keyword>
<keyword id="KW-1185">Reference proteome</keyword>
<keyword id="KW-0704">Schiff base</keyword>
<keyword id="KW-0784">Thiamine biosynthesis</keyword>
<keyword id="KW-0808">Transferase</keyword>
<sequence length="275" mass="29538">MTTTNLSALADPLRLYDEVFGSRLLLGTARYPSPQSLEDAVRACGPAMLTVALRRQSAGTPEGGAGFWKMLRALGVPVLPNTAGCYSADEAYTLAQMSREVFETDWIKLEVIGDDYTLQPDTLALPAAAERLIRDGFKVLPYCTEDLVLCRRLLDVGCRALMPWAAPIGTGRGPTNPYGLRLLRERLPDVPLIVDAGLGVPSHATQVMEWGYDGVLLNTAVAQAGDPVAMARAFAMATQAGRLARLSGPMPERDVAQASTPVVGLPFWHADKNSA</sequence>
<accession>Q8Y372</accession>
<protein>
    <recommendedName>
        <fullName evidence="1">Thiazole synthase</fullName>
        <ecNumber evidence="1">2.8.1.10</ecNumber>
    </recommendedName>
</protein>
<organism>
    <name type="scientific">Ralstonia nicotianae (strain ATCC BAA-1114 / GMI1000)</name>
    <name type="common">Ralstonia solanacearum</name>
    <dbReference type="NCBI Taxonomy" id="267608"/>
    <lineage>
        <taxon>Bacteria</taxon>
        <taxon>Pseudomonadati</taxon>
        <taxon>Pseudomonadota</taxon>
        <taxon>Betaproteobacteria</taxon>
        <taxon>Burkholderiales</taxon>
        <taxon>Burkholderiaceae</taxon>
        <taxon>Ralstonia</taxon>
        <taxon>Ralstonia solanacearum species complex</taxon>
    </lineage>
</organism>
<proteinExistence type="inferred from homology"/>
<name>THIG_RALN1</name>
<comment type="function">
    <text evidence="1">Catalyzes the rearrangement of 1-deoxy-D-xylulose 5-phosphate (DXP) to produce the thiazole phosphate moiety of thiamine. Sulfur is provided by the thiocarboxylate moiety of the carrier protein ThiS. In vitro, sulfur can be provided by H(2)S.</text>
</comment>
<comment type="catalytic activity">
    <reaction evidence="1">
        <text>[ThiS sulfur-carrier protein]-C-terminal-Gly-aminoethanethioate + 2-iminoacetate + 1-deoxy-D-xylulose 5-phosphate = [ThiS sulfur-carrier protein]-C-terminal Gly-Gly + 2-[(2R,5Z)-2-carboxy-4-methylthiazol-5(2H)-ylidene]ethyl phosphate + 2 H2O + H(+)</text>
        <dbReference type="Rhea" id="RHEA:26297"/>
        <dbReference type="Rhea" id="RHEA-COMP:12909"/>
        <dbReference type="Rhea" id="RHEA-COMP:19908"/>
        <dbReference type="ChEBI" id="CHEBI:15377"/>
        <dbReference type="ChEBI" id="CHEBI:15378"/>
        <dbReference type="ChEBI" id="CHEBI:57792"/>
        <dbReference type="ChEBI" id="CHEBI:62899"/>
        <dbReference type="ChEBI" id="CHEBI:77846"/>
        <dbReference type="ChEBI" id="CHEBI:90778"/>
        <dbReference type="ChEBI" id="CHEBI:232372"/>
        <dbReference type="EC" id="2.8.1.10"/>
    </reaction>
</comment>
<comment type="pathway">
    <text evidence="1">Cofactor biosynthesis; thiamine diphosphate biosynthesis.</text>
</comment>
<comment type="subunit">
    <text evidence="1">Homotetramer. Forms heterodimers with either ThiH or ThiS.</text>
</comment>
<comment type="subcellular location">
    <subcellularLocation>
        <location evidence="1">Cytoplasm</location>
    </subcellularLocation>
</comment>
<comment type="similarity">
    <text evidence="1">Belongs to the ThiG family.</text>
</comment>
<reference key="1">
    <citation type="journal article" date="2002" name="Nature">
        <title>Genome sequence of the plant pathogen Ralstonia solanacearum.</title>
        <authorList>
            <person name="Salanoubat M."/>
            <person name="Genin S."/>
            <person name="Artiguenave F."/>
            <person name="Gouzy J."/>
            <person name="Mangenot S."/>
            <person name="Arlat M."/>
            <person name="Billault A."/>
            <person name="Brottier P."/>
            <person name="Camus J.-C."/>
            <person name="Cattolico L."/>
            <person name="Chandler M."/>
            <person name="Choisne N."/>
            <person name="Claudel-Renard C."/>
            <person name="Cunnac S."/>
            <person name="Demange N."/>
            <person name="Gaspin C."/>
            <person name="Lavie M."/>
            <person name="Moisan A."/>
            <person name="Robert C."/>
            <person name="Saurin W."/>
            <person name="Schiex T."/>
            <person name="Siguier P."/>
            <person name="Thebault P."/>
            <person name="Whalen M."/>
            <person name="Wincker P."/>
            <person name="Levy M."/>
            <person name="Weissenbach J."/>
            <person name="Boucher C.A."/>
        </authorList>
    </citation>
    <scope>NUCLEOTIDE SEQUENCE [LARGE SCALE GENOMIC DNA]</scope>
    <source>
        <strain>ATCC BAA-1114 / GMI1000</strain>
    </source>
</reference>
<dbReference type="EC" id="2.8.1.10" evidence="1"/>
<dbReference type="EMBL" id="AL646052">
    <property type="protein sequence ID" value="CAD13637.1"/>
    <property type="molecule type" value="Genomic_DNA"/>
</dbReference>
<dbReference type="RefSeq" id="WP_011000076.1">
    <property type="nucleotide sequence ID" value="NC_003295.1"/>
</dbReference>
<dbReference type="SMR" id="Q8Y372"/>
<dbReference type="STRING" id="267608.RSc0109"/>
<dbReference type="EnsemblBacteria" id="CAD13637">
    <property type="protein sequence ID" value="CAD13637"/>
    <property type="gene ID" value="RSc0109"/>
</dbReference>
<dbReference type="KEGG" id="rso:RSc0109"/>
<dbReference type="eggNOG" id="COG2022">
    <property type="taxonomic scope" value="Bacteria"/>
</dbReference>
<dbReference type="HOGENOM" id="CLU_062233_1_0_4"/>
<dbReference type="UniPathway" id="UPA00060"/>
<dbReference type="Proteomes" id="UP000001436">
    <property type="component" value="Chromosome"/>
</dbReference>
<dbReference type="GO" id="GO:0005737">
    <property type="term" value="C:cytoplasm"/>
    <property type="evidence" value="ECO:0007669"/>
    <property type="project" value="UniProtKB-SubCell"/>
</dbReference>
<dbReference type="GO" id="GO:1990107">
    <property type="term" value="F:thiazole synthase activity"/>
    <property type="evidence" value="ECO:0007669"/>
    <property type="project" value="UniProtKB-EC"/>
</dbReference>
<dbReference type="GO" id="GO:0009229">
    <property type="term" value="P:thiamine diphosphate biosynthetic process"/>
    <property type="evidence" value="ECO:0007669"/>
    <property type="project" value="UniProtKB-UniRule"/>
</dbReference>
<dbReference type="CDD" id="cd04728">
    <property type="entry name" value="ThiG"/>
    <property type="match status" value="1"/>
</dbReference>
<dbReference type="Gene3D" id="3.20.20.70">
    <property type="entry name" value="Aldolase class I"/>
    <property type="match status" value="1"/>
</dbReference>
<dbReference type="HAMAP" id="MF_00443">
    <property type="entry name" value="ThiG"/>
    <property type="match status" value="1"/>
</dbReference>
<dbReference type="InterPro" id="IPR013785">
    <property type="entry name" value="Aldolase_TIM"/>
</dbReference>
<dbReference type="InterPro" id="IPR033983">
    <property type="entry name" value="Thiazole_synthase_ThiG"/>
</dbReference>
<dbReference type="InterPro" id="IPR008867">
    <property type="entry name" value="ThiG"/>
</dbReference>
<dbReference type="PANTHER" id="PTHR34266">
    <property type="entry name" value="THIAZOLE SYNTHASE"/>
    <property type="match status" value="1"/>
</dbReference>
<dbReference type="PANTHER" id="PTHR34266:SF2">
    <property type="entry name" value="THIAZOLE SYNTHASE"/>
    <property type="match status" value="1"/>
</dbReference>
<dbReference type="Pfam" id="PF05690">
    <property type="entry name" value="ThiG"/>
    <property type="match status" value="1"/>
</dbReference>
<dbReference type="SUPFAM" id="SSF110399">
    <property type="entry name" value="ThiG-like"/>
    <property type="match status" value="1"/>
</dbReference>
<gene>
    <name evidence="1" type="primary">thiG</name>
    <name type="ordered locus">RSc0109</name>
    <name type="ORF">RS00979</name>
</gene>
<evidence type="ECO:0000255" key="1">
    <source>
        <dbReference type="HAMAP-Rule" id="MF_00443"/>
    </source>
</evidence>